<gene>
    <name evidence="1" type="primary">cobQ</name>
    <name type="ordered locus">RHECIAT_CH0002598</name>
</gene>
<feature type="chain" id="PRO_1000090241" description="Cobyric acid synthase">
    <location>
        <begin position="1"/>
        <end position="484"/>
    </location>
</feature>
<feature type="domain" description="GATase cobBQ-type" evidence="1">
    <location>
        <begin position="251"/>
        <end position="438"/>
    </location>
</feature>
<feature type="active site" description="Nucleophile" evidence="1">
    <location>
        <position position="333"/>
    </location>
</feature>
<feature type="active site" evidence="1">
    <location>
        <position position="430"/>
    </location>
</feature>
<proteinExistence type="inferred from homology"/>
<name>COBQ_RHIE6</name>
<accession>B3PQX7</accession>
<comment type="function">
    <text evidence="1">Catalyzes amidations at positions B, D, E, and G on adenosylcobyrinic A,C-diamide. NH(2) groups are provided by glutamine, and one molecule of ATP is hydrogenolyzed for each amidation.</text>
</comment>
<comment type="pathway">
    <text evidence="1">Cofactor biosynthesis; adenosylcobalamin biosynthesis.</text>
</comment>
<comment type="similarity">
    <text evidence="1">Belongs to the CobB/CobQ family. CobQ subfamily.</text>
</comment>
<keyword id="KW-0169">Cobalamin biosynthesis</keyword>
<keyword id="KW-0315">Glutamine amidotransferase</keyword>
<organism>
    <name type="scientific">Rhizobium etli (strain CIAT 652)</name>
    <dbReference type="NCBI Taxonomy" id="491916"/>
    <lineage>
        <taxon>Bacteria</taxon>
        <taxon>Pseudomonadati</taxon>
        <taxon>Pseudomonadota</taxon>
        <taxon>Alphaproteobacteria</taxon>
        <taxon>Hyphomicrobiales</taxon>
        <taxon>Rhizobiaceae</taxon>
        <taxon>Rhizobium/Agrobacterium group</taxon>
        <taxon>Rhizobium</taxon>
    </lineage>
</organism>
<reference key="1">
    <citation type="journal article" date="2010" name="Appl. Environ. Microbiol.">
        <title>Conserved symbiotic plasmid DNA sequences in the multireplicon pangenomic structure of Rhizobium etli.</title>
        <authorList>
            <person name="Gonzalez V."/>
            <person name="Acosta J.L."/>
            <person name="Santamaria R.I."/>
            <person name="Bustos P."/>
            <person name="Fernandez J.L."/>
            <person name="Hernandez Gonzalez I.L."/>
            <person name="Diaz R."/>
            <person name="Flores M."/>
            <person name="Palacios R."/>
            <person name="Mora J."/>
            <person name="Davila G."/>
        </authorList>
    </citation>
    <scope>NUCLEOTIDE SEQUENCE [LARGE SCALE GENOMIC DNA]</scope>
    <source>
        <strain>CIAT 652</strain>
    </source>
</reference>
<evidence type="ECO:0000255" key="1">
    <source>
        <dbReference type="HAMAP-Rule" id="MF_00028"/>
    </source>
</evidence>
<sequence length="484" mass="51168">MARAIMLQGTGSDVGKTVLVAGLCRLAANRGLTVRPFKPQNMSNNAAVADDGGEIGRAQWLQSLAARTPSSVHMNPVLLKPQSENGSQIIVQGRVFGQAKGRDYQRLKPQLLGAVLASFEKVADGADLVIVEGAGSPAEINLRAGDIANMGFATQAGVPVVLVGDIDRGGVIASLVGTHAILADADRAMISGYIINKFRGDVSLFDNGIRAIEGFTGWPCFGVVPWLSGAARLPAEDSVVLERLAKGGGGALKIAVPVLPRIANFDDLDPLRAEPDVELVFIRSGERLPADASLVVLPGSKSTISDLADLRAAGWDRDLFAHVRRGGRVIGICGGYQMLGRTVHDPLGLEGGTLETPGLALLDVETEMAPEKTVRNSHARSTEYDAPLAGYQIHLGMTRGPDCGRPSAIVDGVPDGALSANGLIMGTYLHGLFASDAYRTRLLQSFGLSGERRNYRESVDKALDEIAGELERYLDPRWLAGLVG</sequence>
<dbReference type="EMBL" id="CP001074">
    <property type="protein sequence ID" value="ACE91550.1"/>
    <property type="molecule type" value="Genomic_DNA"/>
</dbReference>
<dbReference type="SMR" id="B3PQX7"/>
<dbReference type="KEGG" id="rec:RHECIAT_CH0002598"/>
<dbReference type="eggNOG" id="COG1492">
    <property type="taxonomic scope" value="Bacteria"/>
</dbReference>
<dbReference type="HOGENOM" id="CLU_019250_2_0_5"/>
<dbReference type="UniPathway" id="UPA00148"/>
<dbReference type="Proteomes" id="UP000008817">
    <property type="component" value="Chromosome"/>
</dbReference>
<dbReference type="GO" id="GO:0015420">
    <property type="term" value="F:ABC-type vitamin B12 transporter activity"/>
    <property type="evidence" value="ECO:0007669"/>
    <property type="project" value="UniProtKB-UniRule"/>
</dbReference>
<dbReference type="GO" id="GO:0003824">
    <property type="term" value="F:catalytic activity"/>
    <property type="evidence" value="ECO:0007669"/>
    <property type="project" value="InterPro"/>
</dbReference>
<dbReference type="GO" id="GO:0009236">
    <property type="term" value="P:cobalamin biosynthetic process"/>
    <property type="evidence" value="ECO:0007669"/>
    <property type="project" value="UniProtKB-UniRule"/>
</dbReference>
<dbReference type="CDD" id="cd05389">
    <property type="entry name" value="CobQ_N"/>
    <property type="match status" value="1"/>
</dbReference>
<dbReference type="CDD" id="cd01750">
    <property type="entry name" value="GATase1_CobQ"/>
    <property type="match status" value="1"/>
</dbReference>
<dbReference type="Gene3D" id="3.40.50.880">
    <property type="match status" value="1"/>
</dbReference>
<dbReference type="Gene3D" id="3.40.50.300">
    <property type="entry name" value="P-loop containing nucleotide triphosphate hydrolases"/>
    <property type="match status" value="1"/>
</dbReference>
<dbReference type="HAMAP" id="MF_00028">
    <property type="entry name" value="CobQ"/>
    <property type="match status" value="1"/>
</dbReference>
<dbReference type="InterPro" id="IPR029062">
    <property type="entry name" value="Class_I_gatase-like"/>
</dbReference>
<dbReference type="InterPro" id="IPR002586">
    <property type="entry name" value="CobQ/CobB/MinD/ParA_Nub-bd_dom"/>
</dbReference>
<dbReference type="InterPro" id="IPR033949">
    <property type="entry name" value="CobQ_GATase1"/>
</dbReference>
<dbReference type="InterPro" id="IPR047045">
    <property type="entry name" value="CobQ_N"/>
</dbReference>
<dbReference type="InterPro" id="IPR004459">
    <property type="entry name" value="CobQ_synth"/>
</dbReference>
<dbReference type="InterPro" id="IPR011698">
    <property type="entry name" value="GATase_3"/>
</dbReference>
<dbReference type="InterPro" id="IPR027417">
    <property type="entry name" value="P-loop_NTPase"/>
</dbReference>
<dbReference type="NCBIfam" id="TIGR00313">
    <property type="entry name" value="cobQ"/>
    <property type="match status" value="1"/>
</dbReference>
<dbReference type="NCBIfam" id="NF001989">
    <property type="entry name" value="PRK00784.1"/>
    <property type="match status" value="1"/>
</dbReference>
<dbReference type="PANTHER" id="PTHR21343:SF1">
    <property type="entry name" value="COBYRIC ACID SYNTHASE"/>
    <property type="match status" value="1"/>
</dbReference>
<dbReference type="PANTHER" id="PTHR21343">
    <property type="entry name" value="DETHIOBIOTIN SYNTHETASE"/>
    <property type="match status" value="1"/>
</dbReference>
<dbReference type="Pfam" id="PF01656">
    <property type="entry name" value="CbiA"/>
    <property type="match status" value="1"/>
</dbReference>
<dbReference type="Pfam" id="PF07685">
    <property type="entry name" value="GATase_3"/>
    <property type="match status" value="1"/>
</dbReference>
<dbReference type="SUPFAM" id="SSF52317">
    <property type="entry name" value="Class I glutamine amidotransferase-like"/>
    <property type="match status" value="1"/>
</dbReference>
<dbReference type="SUPFAM" id="SSF52540">
    <property type="entry name" value="P-loop containing nucleoside triphosphate hydrolases"/>
    <property type="match status" value="1"/>
</dbReference>
<dbReference type="PROSITE" id="PS51274">
    <property type="entry name" value="GATASE_COBBQ"/>
    <property type="match status" value="1"/>
</dbReference>
<protein>
    <recommendedName>
        <fullName evidence="1">Cobyric acid synthase</fullName>
    </recommendedName>
</protein>